<gene>
    <name evidence="1" type="primary">pxpA</name>
    <name type="ordered locus">ECP_0726</name>
</gene>
<organism>
    <name type="scientific">Escherichia coli O6:K15:H31 (strain 536 / UPEC)</name>
    <dbReference type="NCBI Taxonomy" id="362663"/>
    <lineage>
        <taxon>Bacteria</taxon>
        <taxon>Pseudomonadati</taxon>
        <taxon>Pseudomonadota</taxon>
        <taxon>Gammaproteobacteria</taxon>
        <taxon>Enterobacterales</taxon>
        <taxon>Enterobacteriaceae</taxon>
        <taxon>Escherichia</taxon>
    </lineage>
</organism>
<reference key="1">
    <citation type="journal article" date="2006" name="Mol. Microbiol.">
        <title>Role of pathogenicity island-associated integrases in the genome plasticity of uropathogenic Escherichia coli strain 536.</title>
        <authorList>
            <person name="Hochhut B."/>
            <person name="Wilde C."/>
            <person name="Balling G."/>
            <person name="Middendorf B."/>
            <person name="Dobrindt U."/>
            <person name="Brzuszkiewicz E."/>
            <person name="Gottschalk G."/>
            <person name="Carniel E."/>
            <person name="Hacker J."/>
        </authorList>
    </citation>
    <scope>NUCLEOTIDE SEQUENCE [LARGE SCALE GENOMIC DNA]</scope>
    <source>
        <strain>536 / UPEC</strain>
    </source>
</reference>
<keyword id="KW-0067">ATP-binding</keyword>
<keyword id="KW-0378">Hydrolase</keyword>
<keyword id="KW-0547">Nucleotide-binding</keyword>
<evidence type="ECO:0000255" key="1">
    <source>
        <dbReference type="HAMAP-Rule" id="MF_00691"/>
    </source>
</evidence>
<comment type="function">
    <text evidence="1">Catalyzes the cleavage of 5-oxoproline to form L-glutamate coupled to the hydrolysis of ATP to ADP and inorganic phosphate.</text>
</comment>
<comment type="catalytic activity">
    <reaction evidence="1">
        <text>5-oxo-L-proline + ATP + 2 H2O = L-glutamate + ADP + phosphate + H(+)</text>
        <dbReference type="Rhea" id="RHEA:10348"/>
        <dbReference type="ChEBI" id="CHEBI:15377"/>
        <dbReference type="ChEBI" id="CHEBI:15378"/>
        <dbReference type="ChEBI" id="CHEBI:29985"/>
        <dbReference type="ChEBI" id="CHEBI:30616"/>
        <dbReference type="ChEBI" id="CHEBI:43474"/>
        <dbReference type="ChEBI" id="CHEBI:58402"/>
        <dbReference type="ChEBI" id="CHEBI:456216"/>
        <dbReference type="EC" id="3.5.2.9"/>
    </reaction>
</comment>
<comment type="subunit">
    <text evidence="1">Forms a complex composed of PxpA, PxpB and PxpC.</text>
</comment>
<comment type="similarity">
    <text evidence="1">Belongs to the LamB/PxpA family.</text>
</comment>
<protein>
    <recommendedName>
        <fullName evidence="1">5-oxoprolinase subunit A</fullName>
        <shortName evidence="1">5-OPase subunit A</shortName>
        <ecNumber evidence="1">3.5.2.9</ecNumber>
    </recommendedName>
    <alternativeName>
        <fullName evidence="1">5-oxoprolinase (ATP-hydrolyzing) subunit A</fullName>
    </alternativeName>
</protein>
<dbReference type="EC" id="3.5.2.9" evidence="1"/>
<dbReference type="EMBL" id="CP000247">
    <property type="protein sequence ID" value="ABG68752.1"/>
    <property type="molecule type" value="Genomic_DNA"/>
</dbReference>
<dbReference type="RefSeq" id="WP_000687123.1">
    <property type="nucleotide sequence ID" value="NC_008253.1"/>
</dbReference>
<dbReference type="SMR" id="Q0TJX9"/>
<dbReference type="KEGG" id="ecp:ECP_0726"/>
<dbReference type="HOGENOM" id="CLU_069535_0_0_6"/>
<dbReference type="Proteomes" id="UP000009182">
    <property type="component" value="Chromosome"/>
</dbReference>
<dbReference type="GO" id="GO:0017168">
    <property type="term" value="F:5-oxoprolinase (ATP-hydrolyzing) activity"/>
    <property type="evidence" value="ECO:0007669"/>
    <property type="project" value="UniProtKB-UniRule"/>
</dbReference>
<dbReference type="GO" id="GO:0005524">
    <property type="term" value="F:ATP binding"/>
    <property type="evidence" value="ECO:0007669"/>
    <property type="project" value="UniProtKB-UniRule"/>
</dbReference>
<dbReference type="GO" id="GO:0005975">
    <property type="term" value="P:carbohydrate metabolic process"/>
    <property type="evidence" value="ECO:0007669"/>
    <property type="project" value="InterPro"/>
</dbReference>
<dbReference type="CDD" id="cd10800">
    <property type="entry name" value="LamB_YcsF_YbgL_like"/>
    <property type="match status" value="1"/>
</dbReference>
<dbReference type="Gene3D" id="3.20.20.370">
    <property type="entry name" value="Glycoside hydrolase/deacetylase"/>
    <property type="match status" value="1"/>
</dbReference>
<dbReference type="HAMAP" id="MF_00691">
    <property type="entry name" value="PxpA"/>
    <property type="match status" value="1"/>
</dbReference>
<dbReference type="InterPro" id="IPR011330">
    <property type="entry name" value="Glyco_hydro/deAcase_b/a-brl"/>
</dbReference>
<dbReference type="InterPro" id="IPR005501">
    <property type="entry name" value="LamB/YcsF/PxpA-like"/>
</dbReference>
<dbReference type="NCBIfam" id="NF003812">
    <property type="entry name" value="PRK05406.1-1"/>
    <property type="match status" value="1"/>
</dbReference>
<dbReference type="NCBIfam" id="NF003814">
    <property type="entry name" value="PRK05406.1-3"/>
    <property type="match status" value="1"/>
</dbReference>
<dbReference type="NCBIfam" id="NF003815">
    <property type="entry name" value="PRK05406.1-4"/>
    <property type="match status" value="1"/>
</dbReference>
<dbReference type="NCBIfam" id="NF003816">
    <property type="entry name" value="PRK05406.1-5"/>
    <property type="match status" value="1"/>
</dbReference>
<dbReference type="PANTHER" id="PTHR30292:SF0">
    <property type="entry name" value="5-OXOPROLINASE SUBUNIT A"/>
    <property type="match status" value="1"/>
</dbReference>
<dbReference type="PANTHER" id="PTHR30292">
    <property type="entry name" value="UNCHARACTERIZED PROTEIN YBGL-RELATED"/>
    <property type="match status" value="1"/>
</dbReference>
<dbReference type="Pfam" id="PF03746">
    <property type="entry name" value="LamB_YcsF"/>
    <property type="match status" value="1"/>
</dbReference>
<dbReference type="SUPFAM" id="SSF88713">
    <property type="entry name" value="Glycoside hydrolase/deacetylase"/>
    <property type="match status" value="1"/>
</dbReference>
<sequence length="244" mass="25856">MKIDLNADLGEGCASDAELLTLVSSANIACGFHAGDAQTMQACVREAIKNGVAIGAHPSFPDRENFGRSAMQLPPETVFAQTLYQIGALAAITRAQGGVMCHVKPHGMLYNQAAKEAQLADAIARAVYACDPALILVGLAGSELIRAGERYGLVTREEVFADRGYQADGSLVPRSQPGALIENEEQALAQTLEMVQYGRVKSITGEWAMVTAQTVCLHGDGEHALAFARRLRATFAEKGIVVAA</sequence>
<accession>Q0TJX9</accession>
<proteinExistence type="inferred from homology"/>
<feature type="chain" id="PRO_1000045203" description="5-oxoprolinase subunit A">
    <location>
        <begin position="1"/>
        <end position="244"/>
    </location>
</feature>
<name>PXPA_ECOL5</name>